<reference key="1">
    <citation type="journal article" date="1998" name="Science">
        <title>Genome sequence of the nematode C. elegans: a platform for investigating biology.</title>
        <authorList>
            <consortium name="The C. elegans sequencing consortium"/>
        </authorList>
    </citation>
    <scope>NUCLEOTIDE SEQUENCE [LARGE SCALE GENOMIC DNA]</scope>
    <scope>ALTERNATIVE SPLICING</scope>
    <source>
        <strain>Bristol N2</strain>
    </source>
</reference>
<comment type="alternative products">
    <event type="alternative splicing"/>
    <isoform>
        <id>Q95QQ2-1</id>
        <name>a</name>
        <sequence type="displayed"/>
    </isoform>
    <isoform>
        <id>Q95QQ2-2</id>
        <name>b</name>
        <sequence type="described" ref="VSP_031802"/>
    </isoform>
    <isoform>
        <id>Q95QQ2-3</id>
        <name>c</name>
        <sequence type="described" ref="VSP_038031"/>
    </isoform>
</comment>
<comment type="similarity">
    <text evidence="1">Belongs to the TRAPPC13 family.</text>
</comment>
<feature type="chain" id="PRO_0000321555" description="Probable trafficking protein particle complex subunit 13 homolog">
    <location>
        <begin position="1"/>
        <end position="401"/>
    </location>
</feature>
<feature type="splice variant" id="VSP_038031" description="In isoform c." evidence="1">
    <location>
        <begin position="1"/>
        <end position="158"/>
    </location>
</feature>
<feature type="splice variant" id="VSP_031802" description="In isoform b." evidence="1">
    <original>DNANQDVYLEAQIENTSNANMFLEKVELDPSQHYNVTSIAHE</original>
    <variation>VSSNRVLCINVVFFRTMRIKMSTSKPKLKIHQMRICSWKKSSWIQVNIIMLLVSLMST</variation>
    <location>
        <begin position="184"/>
        <end position="225"/>
    </location>
</feature>
<protein>
    <recommendedName>
        <fullName>Probable trafficking protein particle complex subunit 13 homolog</fullName>
    </recommendedName>
</protein>
<gene>
    <name type="ORF">C56C10.7</name>
</gene>
<name>TPC13_CAEEL</name>
<proteinExistence type="inferred from homology"/>
<evidence type="ECO:0000305" key="1"/>
<accession>Q95QQ2</accession>
<accession>B2MZA6</accession>
<accession>Q95QQ3</accession>
<dbReference type="EMBL" id="FO080968">
    <property type="protein sequence ID" value="CCD68177.1"/>
    <property type="molecule type" value="Genomic_DNA"/>
</dbReference>
<dbReference type="EMBL" id="FO080968">
    <property type="protein sequence ID" value="CCD68178.1"/>
    <property type="molecule type" value="Genomic_DNA"/>
</dbReference>
<dbReference type="EMBL" id="FO080968">
    <property type="protein sequence ID" value="CCD68186.1"/>
    <property type="molecule type" value="Genomic_DNA"/>
</dbReference>
<dbReference type="RefSeq" id="NP_001129809.1">
    <property type="nucleotide sequence ID" value="NM_001136337.2"/>
</dbReference>
<dbReference type="RefSeq" id="NP_001379835.1">
    <molecule id="Q95QQ2-3"/>
    <property type="nucleotide sequence ID" value="NM_001393102.1"/>
</dbReference>
<dbReference type="RefSeq" id="NP_741009.1">
    <molecule id="Q95QQ2-1"/>
    <property type="nucleotide sequence ID" value="NM_171009.8"/>
</dbReference>
<dbReference type="RefSeq" id="NP_741010.1">
    <property type="nucleotide sequence ID" value="NM_171851.6"/>
</dbReference>
<dbReference type="BioGRID" id="39427">
    <property type="interactions" value="3"/>
</dbReference>
<dbReference type="DIP" id="DIP-24418N"/>
<dbReference type="FunCoup" id="Q95QQ2">
    <property type="interactions" value="2304"/>
</dbReference>
<dbReference type="IntAct" id="Q95QQ2">
    <property type="interactions" value="3"/>
</dbReference>
<dbReference type="STRING" id="6239.C56C10.7a.1"/>
<dbReference type="PeptideAtlas" id="Q95QQ2"/>
<dbReference type="EnsemblMetazoa" id="C56C10.7a.1">
    <molecule id="Q95QQ2-1"/>
    <property type="protein sequence ID" value="C56C10.7a.1"/>
    <property type="gene ID" value="WBGene00016964"/>
</dbReference>
<dbReference type="EnsemblMetazoa" id="C56C10.7a.2">
    <molecule id="Q95QQ2-1"/>
    <property type="protein sequence ID" value="C56C10.7a.2"/>
    <property type="gene ID" value="WBGene00016964"/>
</dbReference>
<dbReference type="EnsemblMetazoa" id="C56C10.7b.1">
    <property type="protein sequence ID" value="C56C10.7b.1"/>
    <property type="gene ID" value="WBGene00016964"/>
</dbReference>
<dbReference type="EnsemblMetazoa" id="C56C10.7c.1">
    <molecule id="Q95QQ2-3"/>
    <property type="protein sequence ID" value="C56C10.7c.1"/>
    <property type="gene ID" value="WBGene00016964"/>
</dbReference>
<dbReference type="GeneID" id="174089"/>
<dbReference type="KEGG" id="cel:CELE_C56C10.7"/>
<dbReference type="UCSC" id="C56C10.7a.1">
    <property type="organism name" value="c. elegans"/>
</dbReference>
<dbReference type="AGR" id="WB:WBGene00016964"/>
<dbReference type="CTD" id="174089"/>
<dbReference type="WormBase" id="C56C10.7a">
    <molecule id="Q95QQ2-1"/>
    <property type="protein sequence ID" value="CE29739"/>
    <property type="gene ID" value="WBGene00016964"/>
</dbReference>
<dbReference type="WormBase" id="C56C10.7b">
    <molecule id="Q95QQ2-2"/>
    <property type="protein sequence ID" value="CE02572"/>
    <property type="gene ID" value="WBGene00016964"/>
</dbReference>
<dbReference type="WormBase" id="C56C10.7c">
    <molecule id="Q95QQ2-3"/>
    <property type="protein sequence ID" value="CE42577"/>
    <property type="gene ID" value="WBGene00016964"/>
</dbReference>
<dbReference type="GeneTree" id="ENSGT00390000015280"/>
<dbReference type="InParanoid" id="Q95QQ2"/>
<dbReference type="OMA" id="YLCVHNG"/>
<dbReference type="OrthoDB" id="10250284at2759"/>
<dbReference type="PhylomeDB" id="Q95QQ2"/>
<dbReference type="Reactome" id="R-CEL-8876198">
    <property type="pathway name" value="RAB GEFs exchange GTP for GDP on RABs"/>
</dbReference>
<dbReference type="PRO" id="PR:Q95QQ2"/>
<dbReference type="Proteomes" id="UP000001940">
    <property type="component" value="Chromosome II"/>
</dbReference>
<dbReference type="Bgee" id="WBGene00016964">
    <property type="expression patterns" value="Expressed in germ line (C elegans) and 4 other cell types or tissues"/>
</dbReference>
<dbReference type="GO" id="GO:1990072">
    <property type="term" value="C:TRAPPIII protein complex"/>
    <property type="evidence" value="ECO:0000318"/>
    <property type="project" value="GO_Central"/>
</dbReference>
<dbReference type="InterPro" id="IPR010378">
    <property type="entry name" value="TRAPPC13"/>
</dbReference>
<dbReference type="InterPro" id="IPR055428">
    <property type="entry name" value="TRAPPC13_C"/>
</dbReference>
<dbReference type="InterPro" id="IPR055429">
    <property type="entry name" value="TRAPPC13_M"/>
</dbReference>
<dbReference type="InterPro" id="IPR055427">
    <property type="entry name" value="TRAPPC13_N"/>
</dbReference>
<dbReference type="PANTHER" id="PTHR13134">
    <property type="entry name" value="TRAFFICKING PROTEIN PARTICLE COMPLEX SUBUNIT 13"/>
    <property type="match status" value="1"/>
</dbReference>
<dbReference type="PANTHER" id="PTHR13134:SF3">
    <property type="entry name" value="TRAFFICKING PROTEIN PARTICLE COMPLEX SUBUNIT 13"/>
    <property type="match status" value="1"/>
</dbReference>
<dbReference type="Pfam" id="PF23643">
    <property type="entry name" value="TRAPPC13_C"/>
    <property type="match status" value="1"/>
</dbReference>
<dbReference type="Pfam" id="PF23647">
    <property type="entry name" value="TRAPPC13_M"/>
    <property type="match status" value="1"/>
</dbReference>
<dbReference type="Pfam" id="PF06159">
    <property type="entry name" value="TRAPPC13_N"/>
    <property type="match status" value="1"/>
</dbReference>
<organism>
    <name type="scientific">Caenorhabditis elegans</name>
    <dbReference type="NCBI Taxonomy" id="6239"/>
    <lineage>
        <taxon>Eukaryota</taxon>
        <taxon>Metazoa</taxon>
        <taxon>Ecdysozoa</taxon>
        <taxon>Nematoda</taxon>
        <taxon>Chromadorea</taxon>
        <taxon>Rhabditida</taxon>
        <taxon>Rhabditina</taxon>
        <taxon>Rhabditomorpha</taxon>
        <taxon>Rhabditoidea</taxon>
        <taxon>Rhabditidae</taxon>
        <taxon>Peloderinae</taxon>
        <taxon>Caenorhabditis</taxon>
    </lineage>
</organism>
<sequence length="401" mass="44844">MADNPASSSSQQLLALRVMRLARPKFAPVDGFSHDPVDPTGFGELLAGKVSEISKESRQDLPIGEYLIAPQMFENIYLGETFTFYVNVVNESEKTVSSVSLKCELQTSTQRVVLPCSVQDATIESSKCEGQVISHEVKEIGQHILICSVNYKTSNGENMYFRKFFKFPVSKPIDVKTKFYSAEDNANQDVYLEAQIENTSNANMFLEKVELDPSQHYNVTSIAHEDEFGDVGKLLKPKDIRQFLFCLTPADVHNTLGYKDLTSIGKLDMSWRTSMGEKGRLQTSALQRIAPGYGDVRLSVEKTPACVDVQKPFEVSCRLYNCSERALDLQLRLEQPSNRHLVFCSPSGVSLGQLPPSQHVDFSLNVFPVTVGIQSISGIRITDTFTKRIYEHDDIAQIFVS</sequence>
<keyword id="KW-0025">Alternative splicing</keyword>
<keyword id="KW-1185">Reference proteome</keyword>